<evidence type="ECO:0000255" key="1">
    <source>
        <dbReference type="HAMAP-Rule" id="MF_01347"/>
    </source>
</evidence>
<proteinExistence type="inferred from homology"/>
<comment type="function">
    <text evidence="1">Produces ATP from ADP in the presence of a proton gradient across the membrane. The catalytic sites are hosted primarily by the beta subunits.</text>
</comment>
<comment type="catalytic activity">
    <reaction evidence="1">
        <text>ATP + H2O + 4 H(+)(in) = ADP + phosphate + 5 H(+)(out)</text>
        <dbReference type="Rhea" id="RHEA:57720"/>
        <dbReference type="ChEBI" id="CHEBI:15377"/>
        <dbReference type="ChEBI" id="CHEBI:15378"/>
        <dbReference type="ChEBI" id="CHEBI:30616"/>
        <dbReference type="ChEBI" id="CHEBI:43474"/>
        <dbReference type="ChEBI" id="CHEBI:456216"/>
        <dbReference type="EC" id="7.1.2.2"/>
    </reaction>
</comment>
<comment type="subunit">
    <text evidence="1">F-type ATPases have 2 components, CF(1) - the catalytic core - and CF(0) - the membrane proton channel. CF(1) has five subunits: alpha(3), beta(3), gamma(1), delta(1), epsilon(1). CF(0) has three main subunits: a(1), b(2) and c(9-12). The alpha and beta chains form an alternating ring which encloses part of the gamma chain. CF(1) is attached to CF(0) by a central stalk formed by the gamma and epsilon chains, while a peripheral stalk is formed by the delta and b chains.</text>
</comment>
<comment type="subcellular location">
    <subcellularLocation>
        <location evidence="1">Cell inner membrane</location>
        <topology evidence="1">Peripheral membrane protein</topology>
    </subcellularLocation>
</comment>
<comment type="similarity">
    <text evidence="1">Belongs to the ATPase alpha/beta chains family.</text>
</comment>
<dbReference type="EC" id="7.1.2.2" evidence="1"/>
<dbReference type="EMBL" id="CP000699">
    <property type="protein sequence ID" value="ABQ66991.1"/>
    <property type="molecule type" value="Genomic_DNA"/>
</dbReference>
<dbReference type="SMR" id="A5V3X5"/>
<dbReference type="STRING" id="392499.Swit_0623"/>
<dbReference type="PaxDb" id="392499-Swit_0623"/>
<dbReference type="KEGG" id="swi:Swit_0623"/>
<dbReference type="eggNOG" id="COG0055">
    <property type="taxonomic scope" value="Bacteria"/>
</dbReference>
<dbReference type="HOGENOM" id="CLU_022398_0_2_5"/>
<dbReference type="OrthoDB" id="9801639at2"/>
<dbReference type="Proteomes" id="UP000001989">
    <property type="component" value="Chromosome"/>
</dbReference>
<dbReference type="GO" id="GO:0005886">
    <property type="term" value="C:plasma membrane"/>
    <property type="evidence" value="ECO:0007669"/>
    <property type="project" value="UniProtKB-SubCell"/>
</dbReference>
<dbReference type="GO" id="GO:0045259">
    <property type="term" value="C:proton-transporting ATP synthase complex"/>
    <property type="evidence" value="ECO:0007669"/>
    <property type="project" value="UniProtKB-KW"/>
</dbReference>
<dbReference type="GO" id="GO:0005524">
    <property type="term" value="F:ATP binding"/>
    <property type="evidence" value="ECO:0007669"/>
    <property type="project" value="UniProtKB-UniRule"/>
</dbReference>
<dbReference type="GO" id="GO:0016887">
    <property type="term" value="F:ATP hydrolysis activity"/>
    <property type="evidence" value="ECO:0007669"/>
    <property type="project" value="InterPro"/>
</dbReference>
<dbReference type="GO" id="GO:0046933">
    <property type="term" value="F:proton-transporting ATP synthase activity, rotational mechanism"/>
    <property type="evidence" value="ECO:0007669"/>
    <property type="project" value="UniProtKB-UniRule"/>
</dbReference>
<dbReference type="CDD" id="cd18110">
    <property type="entry name" value="ATP-synt_F1_beta_C"/>
    <property type="match status" value="1"/>
</dbReference>
<dbReference type="CDD" id="cd18115">
    <property type="entry name" value="ATP-synt_F1_beta_N"/>
    <property type="match status" value="1"/>
</dbReference>
<dbReference type="CDD" id="cd01133">
    <property type="entry name" value="F1-ATPase_beta_CD"/>
    <property type="match status" value="1"/>
</dbReference>
<dbReference type="FunFam" id="1.10.1140.10:FF:000001">
    <property type="entry name" value="ATP synthase subunit beta"/>
    <property type="match status" value="1"/>
</dbReference>
<dbReference type="FunFam" id="2.40.10.170:FF:000005">
    <property type="entry name" value="ATP synthase subunit beta"/>
    <property type="match status" value="1"/>
</dbReference>
<dbReference type="FunFam" id="3.40.50.300:FF:000026">
    <property type="entry name" value="ATP synthase subunit beta"/>
    <property type="match status" value="1"/>
</dbReference>
<dbReference type="Gene3D" id="2.40.10.170">
    <property type="match status" value="1"/>
</dbReference>
<dbReference type="Gene3D" id="1.10.1140.10">
    <property type="entry name" value="Bovine Mitochondrial F1-atpase, Atp Synthase Beta Chain, Chain D, domain 3"/>
    <property type="match status" value="1"/>
</dbReference>
<dbReference type="Gene3D" id="3.40.50.300">
    <property type="entry name" value="P-loop containing nucleotide triphosphate hydrolases"/>
    <property type="match status" value="1"/>
</dbReference>
<dbReference type="HAMAP" id="MF_01347">
    <property type="entry name" value="ATP_synth_beta_bact"/>
    <property type="match status" value="1"/>
</dbReference>
<dbReference type="InterPro" id="IPR003593">
    <property type="entry name" value="AAA+_ATPase"/>
</dbReference>
<dbReference type="InterPro" id="IPR055190">
    <property type="entry name" value="ATP-synt_VA_C"/>
</dbReference>
<dbReference type="InterPro" id="IPR005722">
    <property type="entry name" value="ATP_synth_F1_bsu"/>
</dbReference>
<dbReference type="InterPro" id="IPR020003">
    <property type="entry name" value="ATPase_a/bsu_AS"/>
</dbReference>
<dbReference type="InterPro" id="IPR050053">
    <property type="entry name" value="ATPase_alpha/beta_chains"/>
</dbReference>
<dbReference type="InterPro" id="IPR004100">
    <property type="entry name" value="ATPase_F1/V1/A1_a/bsu_N"/>
</dbReference>
<dbReference type="InterPro" id="IPR036121">
    <property type="entry name" value="ATPase_F1/V1/A1_a/bsu_N_sf"/>
</dbReference>
<dbReference type="InterPro" id="IPR000194">
    <property type="entry name" value="ATPase_F1/V1/A1_a/bsu_nucl-bd"/>
</dbReference>
<dbReference type="InterPro" id="IPR024034">
    <property type="entry name" value="ATPase_F1/V1_b/a_C"/>
</dbReference>
<dbReference type="InterPro" id="IPR027417">
    <property type="entry name" value="P-loop_NTPase"/>
</dbReference>
<dbReference type="NCBIfam" id="TIGR01039">
    <property type="entry name" value="atpD"/>
    <property type="match status" value="1"/>
</dbReference>
<dbReference type="PANTHER" id="PTHR15184">
    <property type="entry name" value="ATP SYNTHASE"/>
    <property type="match status" value="1"/>
</dbReference>
<dbReference type="PANTHER" id="PTHR15184:SF71">
    <property type="entry name" value="ATP SYNTHASE SUBUNIT BETA, MITOCHONDRIAL"/>
    <property type="match status" value="1"/>
</dbReference>
<dbReference type="Pfam" id="PF00006">
    <property type="entry name" value="ATP-synt_ab"/>
    <property type="match status" value="1"/>
</dbReference>
<dbReference type="Pfam" id="PF02874">
    <property type="entry name" value="ATP-synt_ab_N"/>
    <property type="match status" value="1"/>
</dbReference>
<dbReference type="Pfam" id="PF22919">
    <property type="entry name" value="ATP-synt_VA_C"/>
    <property type="match status" value="1"/>
</dbReference>
<dbReference type="PIRSF" id="PIRSF039072">
    <property type="entry name" value="ATPase_subunit_beta"/>
    <property type="match status" value="1"/>
</dbReference>
<dbReference type="SMART" id="SM00382">
    <property type="entry name" value="AAA"/>
    <property type="match status" value="1"/>
</dbReference>
<dbReference type="SUPFAM" id="SSF47917">
    <property type="entry name" value="C-terminal domain of alpha and beta subunits of F1 ATP synthase"/>
    <property type="match status" value="1"/>
</dbReference>
<dbReference type="SUPFAM" id="SSF50615">
    <property type="entry name" value="N-terminal domain of alpha and beta subunits of F1 ATP synthase"/>
    <property type="match status" value="1"/>
</dbReference>
<dbReference type="SUPFAM" id="SSF52540">
    <property type="entry name" value="P-loop containing nucleoside triphosphate hydrolases"/>
    <property type="match status" value="1"/>
</dbReference>
<dbReference type="PROSITE" id="PS00152">
    <property type="entry name" value="ATPASE_ALPHA_BETA"/>
    <property type="match status" value="1"/>
</dbReference>
<feature type="chain" id="PRO_0000339591" description="ATP synthase subunit beta">
    <location>
        <begin position="1"/>
        <end position="484"/>
    </location>
</feature>
<feature type="binding site" evidence="1">
    <location>
        <begin position="156"/>
        <end position="163"/>
    </location>
    <ligand>
        <name>ATP</name>
        <dbReference type="ChEBI" id="CHEBI:30616"/>
    </ligand>
</feature>
<sequence length="484" mass="51479">MAKAPTTKNVGRISQVIGAVVDVSFDGSLPAILNALETTNNGNRLVLEVAQHLGEGTVRTIAMDATDGLTRGQEVTDTGSQIRVPVGPQTLGRILNVIGEPIDERGPVNATQTSPIHAEAPLFVDQSTDASILVTGIKVIDLLAPYAKGGKIGLFGGAGVGKTVLIQELINNIAKGHGGTSVFAGVGERTREGNDLYHEFLDAGVIAKDADGNPTPEGSKVALVFGQMNEPPGARARVALSGLTIAEYFRDVEGQDVLFFVDNIFRFTQAGSEVSALLGRIPSAVGYQPTLSTDMGALQERITSTNKGSITSVQAIYVPADDLTDPAPATSFAHLDATTNLNRAISELGIYPAVDPLDSTSRMLEPRIVGQEHYETARAVQETLQKYKSLQDIIAILGMDELSEEDKLTVQRARKIQRFLSQPFHVAEVFTGIAGKFVAIEDTVKSFKAVVEGEYDHLPEAAFYMVGGIDEVVEKAKKLAAEAA</sequence>
<name>ATPB_RHIWR</name>
<gene>
    <name evidence="1" type="primary">atpD</name>
    <name type="ordered locus">Swit_0623</name>
</gene>
<keyword id="KW-0066">ATP synthesis</keyword>
<keyword id="KW-0067">ATP-binding</keyword>
<keyword id="KW-0997">Cell inner membrane</keyword>
<keyword id="KW-1003">Cell membrane</keyword>
<keyword id="KW-0139">CF(1)</keyword>
<keyword id="KW-0375">Hydrogen ion transport</keyword>
<keyword id="KW-0406">Ion transport</keyword>
<keyword id="KW-0472">Membrane</keyword>
<keyword id="KW-0547">Nucleotide-binding</keyword>
<keyword id="KW-1185">Reference proteome</keyword>
<keyword id="KW-1278">Translocase</keyword>
<keyword id="KW-0813">Transport</keyword>
<reference key="1">
    <citation type="journal article" date="2010" name="J. Bacteriol.">
        <title>Genome sequence of the dioxin-mineralizing bacterium Sphingomonas wittichii RW1.</title>
        <authorList>
            <person name="Miller T.R."/>
            <person name="Delcher A.L."/>
            <person name="Salzberg S.L."/>
            <person name="Saunders E."/>
            <person name="Detter J.C."/>
            <person name="Halden R.U."/>
        </authorList>
    </citation>
    <scope>NUCLEOTIDE SEQUENCE [LARGE SCALE GENOMIC DNA]</scope>
    <source>
        <strain>DSM 6014 / CCUG 31198 / JCM 15750 / NBRC 105917 / EY 4224 / RW1</strain>
    </source>
</reference>
<organism>
    <name type="scientific">Rhizorhabdus wittichii (strain DSM 6014 / CCUG 31198 / JCM 15750 / NBRC 105917 / EY 4224 / RW1)</name>
    <name type="common">Sphingomonas wittichii</name>
    <dbReference type="NCBI Taxonomy" id="392499"/>
    <lineage>
        <taxon>Bacteria</taxon>
        <taxon>Pseudomonadati</taxon>
        <taxon>Pseudomonadota</taxon>
        <taxon>Alphaproteobacteria</taxon>
        <taxon>Sphingomonadales</taxon>
        <taxon>Sphingomonadaceae</taxon>
        <taxon>Rhizorhabdus</taxon>
    </lineage>
</organism>
<accession>A5V3X5</accession>
<protein>
    <recommendedName>
        <fullName evidence="1">ATP synthase subunit beta</fullName>
        <ecNumber evidence="1">7.1.2.2</ecNumber>
    </recommendedName>
    <alternativeName>
        <fullName evidence="1">ATP synthase F1 sector subunit beta</fullName>
    </alternativeName>
    <alternativeName>
        <fullName evidence="1">F-ATPase subunit beta</fullName>
    </alternativeName>
</protein>